<reference key="1">
    <citation type="journal article" date="1998" name="Nature">
        <title>Analysis of 1.9 Mb of contiguous sequence from chromosome 4 of Arabidopsis thaliana.</title>
        <authorList>
            <person name="Bevan M."/>
            <person name="Bancroft I."/>
            <person name="Bent E."/>
            <person name="Love K."/>
            <person name="Goodman H.M."/>
            <person name="Dean C."/>
            <person name="Bergkamp R."/>
            <person name="Dirkse W."/>
            <person name="van Staveren M."/>
            <person name="Stiekema W."/>
            <person name="Drost L."/>
            <person name="Ridley P."/>
            <person name="Hudson S.-A."/>
            <person name="Patel K."/>
            <person name="Murphy G."/>
            <person name="Piffanelli P."/>
            <person name="Wedler H."/>
            <person name="Wedler E."/>
            <person name="Wambutt R."/>
            <person name="Weitzenegger T."/>
            <person name="Pohl T."/>
            <person name="Terryn N."/>
            <person name="Gielen J."/>
            <person name="Villarroel R."/>
            <person name="De Clercq R."/>
            <person name="van Montagu M."/>
            <person name="Lecharny A."/>
            <person name="Aubourg S."/>
            <person name="Gy I."/>
            <person name="Kreis M."/>
            <person name="Lao N."/>
            <person name="Kavanagh T."/>
            <person name="Hempel S."/>
            <person name="Kotter P."/>
            <person name="Entian K.-D."/>
            <person name="Rieger M."/>
            <person name="Schaefer M."/>
            <person name="Funk B."/>
            <person name="Mueller-Auer S."/>
            <person name="Silvey M."/>
            <person name="James R."/>
            <person name="Monfort A."/>
            <person name="Pons A."/>
            <person name="Puigdomenech P."/>
            <person name="Douka A."/>
            <person name="Voukelatou E."/>
            <person name="Milioni D."/>
            <person name="Hatzopoulos P."/>
            <person name="Piravandi E."/>
            <person name="Obermaier B."/>
            <person name="Hilbert H."/>
            <person name="Duesterhoeft A."/>
            <person name="Moores T."/>
            <person name="Jones J.D.G."/>
            <person name="Eneva T."/>
            <person name="Palme K."/>
            <person name="Benes V."/>
            <person name="Rechmann S."/>
            <person name="Ansorge W."/>
            <person name="Cooke R."/>
            <person name="Berger C."/>
            <person name="Delseny M."/>
            <person name="Voet M."/>
            <person name="Volckaert G."/>
            <person name="Mewes H.-W."/>
            <person name="Klosterman S."/>
            <person name="Schueller C."/>
            <person name="Chalwatzis N."/>
        </authorList>
    </citation>
    <scope>NUCLEOTIDE SEQUENCE [LARGE SCALE GENOMIC DNA]</scope>
    <source>
        <strain>cv. Columbia</strain>
    </source>
</reference>
<reference key="2">
    <citation type="journal article" date="1999" name="Nature">
        <title>Sequence and analysis of chromosome 4 of the plant Arabidopsis thaliana.</title>
        <authorList>
            <person name="Mayer K.F.X."/>
            <person name="Schueller C."/>
            <person name="Wambutt R."/>
            <person name="Murphy G."/>
            <person name="Volckaert G."/>
            <person name="Pohl T."/>
            <person name="Duesterhoeft A."/>
            <person name="Stiekema W."/>
            <person name="Entian K.-D."/>
            <person name="Terryn N."/>
            <person name="Harris B."/>
            <person name="Ansorge W."/>
            <person name="Brandt P."/>
            <person name="Grivell L.A."/>
            <person name="Rieger M."/>
            <person name="Weichselgartner M."/>
            <person name="de Simone V."/>
            <person name="Obermaier B."/>
            <person name="Mache R."/>
            <person name="Mueller M."/>
            <person name="Kreis M."/>
            <person name="Delseny M."/>
            <person name="Puigdomenech P."/>
            <person name="Watson M."/>
            <person name="Schmidtheini T."/>
            <person name="Reichert B."/>
            <person name="Portetelle D."/>
            <person name="Perez-Alonso M."/>
            <person name="Boutry M."/>
            <person name="Bancroft I."/>
            <person name="Vos P."/>
            <person name="Hoheisel J."/>
            <person name="Zimmermann W."/>
            <person name="Wedler H."/>
            <person name="Ridley P."/>
            <person name="Langham S.-A."/>
            <person name="McCullagh B."/>
            <person name="Bilham L."/>
            <person name="Robben J."/>
            <person name="van der Schueren J."/>
            <person name="Grymonprez B."/>
            <person name="Chuang Y.-J."/>
            <person name="Vandenbussche F."/>
            <person name="Braeken M."/>
            <person name="Weltjens I."/>
            <person name="Voet M."/>
            <person name="Bastiaens I."/>
            <person name="Aert R."/>
            <person name="Defoor E."/>
            <person name="Weitzenegger T."/>
            <person name="Bothe G."/>
            <person name="Ramsperger U."/>
            <person name="Hilbert H."/>
            <person name="Braun M."/>
            <person name="Holzer E."/>
            <person name="Brandt A."/>
            <person name="Peters S."/>
            <person name="van Staveren M."/>
            <person name="Dirkse W."/>
            <person name="Mooijman P."/>
            <person name="Klein Lankhorst R."/>
            <person name="Rose M."/>
            <person name="Hauf J."/>
            <person name="Koetter P."/>
            <person name="Berneiser S."/>
            <person name="Hempel S."/>
            <person name="Feldpausch M."/>
            <person name="Lamberth S."/>
            <person name="Van den Daele H."/>
            <person name="De Keyser A."/>
            <person name="Buysshaert C."/>
            <person name="Gielen J."/>
            <person name="Villarroel R."/>
            <person name="De Clercq R."/>
            <person name="van Montagu M."/>
            <person name="Rogers J."/>
            <person name="Cronin A."/>
            <person name="Quail M.A."/>
            <person name="Bray-Allen S."/>
            <person name="Clark L."/>
            <person name="Doggett J."/>
            <person name="Hall S."/>
            <person name="Kay M."/>
            <person name="Lennard N."/>
            <person name="McLay K."/>
            <person name="Mayes R."/>
            <person name="Pettett A."/>
            <person name="Rajandream M.A."/>
            <person name="Lyne M."/>
            <person name="Benes V."/>
            <person name="Rechmann S."/>
            <person name="Borkova D."/>
            <person name="Bloecker H."/>
            <person name="Scharfe M."/>
            <person name="Grimm M."/>
            <person name="Loehnert T.-H."/>
            <person name="Dose S."/>
            <person name="de Haan M."/>
            <person name="Maarse A.C."/>
            <person name="Schaefer M."/>
            <person name="Mueller-Auer S."/>
            <person name="Gabel C."/>
            <person name="Fuchs M."/>
            <person name="Fartmann B."/>
            <person name="Granderath K."/>
            <person name="Dauner D."/>
            <person name="Herzl A."/>
            <person name="Neumann S."/>
            <person name="Argiriou A."/>
            <person name="Vitale D."/>
            <person name="Liguori R."/>
            <person name="Piravandi E."/>
            <person name="Massenet O."/>
            <person name="Quigley F."/>
            <person name="Clabauld G."/>
            <person name="Muendlein A."/>
            <person name="Felber R."/>
            <person name="Schnabl S."/>
            <person name="Hiller R."/>
            <person name="Schmidt W."/>
            <person name="Lecharny A."/>
            <person name="Aubourg S."/>
            <person name="Chefdor F."/>
            <person name="Cooke R."/>
            <person name="Berger C."/>
            <person name="Monfort A."/>
            <person name="Casacuberta E."/>
            <person name="Gibbons T."/>
            <person name="Weber N."/>
            <person name="Vandenbol M."/>
            <person name="Bargues M."/>
            <person name="Terol J."/>
            <person name="Torres A."/>
            <person name="Perez-Perez A."/>
            <person name="Purnelle B."/>
            <person name="Bent E."/>
            <person name="Johnson S."/>
            <person name="Tacon D."/>
            <person name="Jesse T."/>
            <person name="Heijnen L."/>
            <person name="Schwarz S."/>
            <person name="Scholler P."/>
            <person name="Heber S."/>
            <person name="Francs P."/>
            <person name="Bielke C."/>
            <person name="Frishman D."/>
            <person name="Haase D."/>
            <person name="Lemcke K."/>
            <person name="Mewes H.-W."/>
            <person name="Stocker S."/>
            <person name="Zaccaria P."/>
            <person name="Bevan M."/>
            <person name="Wilson R.K."/>
            <person name="de la Bastide M."/>
            <person name="Habermann K."/>
            <person name="Parnell L."/>
            <person name="Dedhia N."/>
            <person name="Gnoj L."/>
            <person name="Schutz K."/>
            <person name="Huang E."/>
            <person name="Spiegel L."/>
            <person name="Sekhon M."/>
            <person name="Murray J."/>
            <person name="Sheet P."/>
            <person name="Cordes M."/>
            <person name="Abu-Threideh J."/>
            <person name="Stoneking T."/>
            <person name="Kalicki J."/>
            <person name="Graves T."/>
            <person name="Harmon G."/>
            <person name="Edwards J."/>
            <person name="Latreille P."/>
            <person name="Courtney L."/>
            <person name="Cloud J."/>
            <person name="Abbott A."/>
            <person name="Scott K."/>
            <person name="Johnson D."/>
            <person name="Minx P."/>
            <person name="Bentley D."/>
            <person name="Fulton B."/>
            <person name="Miller N."/>
            <person name="Greco T."/>
            <person name="Kemp K."/>
            <person name="Kramer J."/>
            <person name="Fulton L."/>
            <person name="Mardis E."/>
            <person name="Dante M."/>
            <person name="Pepin K."/>
            <person name="Hillier L.W."/>
            <person name="Nelson J."/>
            <person name="Spieth J."/>
            <person name="Ryan E."/>
            <person name="Andrews S."/>
            <person name="Geisel C."/>
            <person name="Layman D."/>
            <person name="Du H."/>
            <person name="Ali J."/>
            <person name="Berghoff A."/>
            <person name="Jones K."/>
            <person name="Drone K."/>
            <person name="Cotton M."/>
            <person name="Joshu C."/>
            <person name="Antonoiu B."/>
            <person name="Zidanic M."/>
            <person name="Strong C."/>
            <person name="Sun H."/>
            <person name="Lamar B."/>
            <person name="Yordan C."/>
            <person name="Ma P."/>
            <person name="Zhong J."/>
            <person name="Preston R."/>
            <person name="Vil D."/>
            <person name="Shekher M."/>
            <person name="Matero A."/>
            <person name="Shah R."/>
            <person name="Swaby I.K."/>
            <person name="O'Shaughnessy A."/>
            <person name="Rodriguez M."/>
            <person name="Hoffman J."/>
            <person name="Till S."/>
            <person name="Granat S."/>
            <person name="Shohdy N."/>
            <person name="Hasegawa A."/>
            <person name="Hameed A."/>
            <person name="Lodhi M."/>
            <person name="Johnson A."/>
            <person name="Chen E."/>
            <person name="Marra M.A."/>
            <person name="Martienssen R."/>
            <person name="McCombie W.R."/>
        </authorList>
    </citation>
    <scope>NUCLEOTIDE SEQUENCE [LARGE SCALE GENOMIC DNA]</scope>
    <source>
        <strain>cv. Columbia</strain>
    </source>
</reference>
<reference key="3">
    <citation type="journal article" date="2017" name="Plant J.">
        <title>Araport11: a complete reannotation of the Arabidopsis thaliana reference genome.</title>
        <authorList>
            <person name="Cheng C.Y."/>
            <person name="Krishnakumar V."/>
            <person name="Chan A.P."/>
            <person name="Thibaud-Nissen F."/>
            <person name="Schobel S."/>
            <person name="Town C.D."/>
        </authorList>
    </citation>
    <scope>GENOME REANNOTATION</scope>
    <source>
        <strain>cv. Columbia</strain>
    </source>
</reference>
<reference key="4">
    <citation type="journal article" date="2003" name="Science">
        <title>Empirical analysis of transcriptional activity in the Arabidopsis genome.</title>
        <authorList>
            <person name="Yamada K."/>
            <person name="Lim J."/>
            <person name="Dale J.M."/>
            <person name="Chen H."/>
            <person name="Shinn P."/>
            <person name="Palm C.J."/>
            <person name="Southwick A.M."/>
            <person name="Wu H.C."/>
            <person name="Kim C.J."/>
            <person name="Nguyen M."/>
            <person name="Pham P.K."/>
            <person name="Cheuk R.F."/>
            <person name="Karlin-Newmann G."/>
            <person name="Liu S.X."/>
            <person name="Lam B."/>
            <person name="Sakano H."/>
            <person name="Wu T."/>
            <person name="Yu G."/>
            <person name="Miranda M."/>
            <person name="Quach H.L."/>
            <person name="Tripp M."/>
            <person name="Chang C.H."/>
            <person name="Lee J.M."/>
            <person name="Toriumi M.J."/>
            <person name="Chan M.M."/>
            <person name="Tang C.C."/>
            <person name="Onodera C.S."/>
            <person name="Deng J.M."/>
            <person name="Akiyama K."/>
            <person name="Ansari Y."/>
            <person name="Arakawa T."/>
            <person name="Banh J."/>
            <person name="Banno F."/>
            <person name="Bowser L."/>
            <person name="Brooks S.Y."/>
            <person name="Carninci P."/>
            <person name="Chao Q."/>
            <person name="Choy N."/>
            <person name="Enju A."/>
            <person name="Goldsmith A.D."/>
            <person name="Gurjal M."/>
            <person name="Hansen N.F."/>
            <person name="Hayashizaki Y."/>
            <person name="Johnson-Hopson C."/>
            <person name="Hsuan V.W."/>
            <person name="Iida K."/>
            <person name="Karnes M."/>
            <person name="Khan S."/>
            <person name="Koesema E."/>
            <person name="Ishida J."/>
            <person name="Jiang P.X."/>
            <person name="Jones T."/>
            <person name="Kawai J."/>
            <person name="Kamiya A."/>
            <person name="Meyers C."/>
            <person name="Nakajima M."/>
            <person name="Narusaka M."/>
            <person name="Seki M."/>
            <person name="Sakurai T."/>
            <person name="Satou M."/>
            <person name="Tamse R."/>
            <person name="Vaysberg M."/>
            <person name="Wallender E.K."/>
            <person name="Wong C."/>
            <person name="Yamamura Y."/>
            <person name="Yuan S."/>
            <person name="Shinozaki K."/>
            <person name="Davis R.W."/>
            <person name="Theologis A."/>
            <person name="Ecker J.R."/>
        </authorList>
    </citation>
    <scope>NUCLEOTIDE SEQUENCE [LARGE SCALE MRNA]</scope>
    <source>
        <strain>cv. Columbia</strain>
    </source>
</reference>
<reference key="5">
    <citation type="submission" date="1993-11" db="EMBL/GenBank/DDBJ databases">
        <title>The Arabidopsis thaliana transcribed genome: the GDR cDNA program.</title>
        <authorList>
            <person name="Raynal M."/>
            <person name="Grellet F."/>
            <person name="Laudie M."/>
            <person name="Meyer Y."/>
            <person name="Cooke R."/>
            <person name="Delseny M."/>
        </authorList>
    </citation>
    <scope>NUCLEOTIDE SEQUENCE [LARGE SCALE MRNA] OF 1-145</scope>
    <source>
        <strain>cv. Columbia</strain>
        <tissue>Seed</tissue>
    </source>
</reference>
<reference key="6">
    <citation type="journal article" date="2002" name="Mol. Plant Microbe Interact.">
        <title>Lotus japonicus gene Ljsbp is highly conserved among plants and animals and encodes a homologue to the mammalian selenium-binding proteins.</title>
        <authorList>
            <person name="Flemetakis E."/>
            <person name="Agalou A."/>
            <person name="Kavroulakis N."/>
            <person name="Dimou M."/>
            <person name="Martsikovskaya A."/>
            <person name="Slater A."/>
            <person name="Spaink H.P."/>
            <person name="Roussis A."/>
            <person name="Katinakis P."/>
        </authorList>
    </citation>
    <scope>NUCLEOTIDE SEQUENCE [MRNA] OF 20-490</scope>
    <source>
        <strain>cv. Columbia</strain>
        <tissue>Flower</tissue>
    </source>
</reference>
<reference key="7">
    <citation type="journal article" date="2006" name="Proteomics">
        <title>The early responses of Arabidopsis thaliana cells to cadmium exposure explored by protein and metabolite profiling analyses.</title>
        <authorList>
            <person name="Sarry J.-E."/>
            <person name="Kuhn L."/>
            <person name="Ducruix C."/>
            <person name="Lafaye A."/>
            <person name="Junot C."/>
            <person name="Hugouvieux V."/>
            <person name="Jourdain A."/>
            <person name="Bastien O."/>
            <person name="Fievet J.B."/>
            <person name="Vailhen D."/>
            <person name="Amekraz B."/>
            <person name="Moulin C."/>
            <person name="Ezan E."/>
            <person name="Garin J."/>
            <person name="Bourguignon J."/>
        </authorList>
    </citation>
    <scope>INDUCTION BY CADMIUM</scope>
    <source>
        <strain>cv. Columbia</strain>
    </source>
</reference>
<reference key="8">
    <citation type="journal article" date="2008" name="Plant Physiol.">
        <title>The Arabidopsis putative selenium-binding protein family: expression study and characterization of SBP1 as a potential new player in cadmium detoxification processes.</title>
        <authorList>
            <person name="Dutilleul C."/>
            <person name="Jourdain A."/>
            <person name="Bourguignon J."/>
            <person name="Hugouvieux V."/>
        </authorList>
    </citation>
    <scope>FUNCTION</scope>
    <scope>TISSUE SPECIFICITY</scope>
    <scope>INDUCTION BY CADMIUM</scope>
</reference>
<reference key="9">
    <citation type="journal article" date="2009" name="Plant Physiol.">
        <title>Arabidopsis putative selenium-binding protein1 expression is tightly linked to cellular sulfur demand and can reduce sensitivity to stresses requiring glutathione for tolerance.</title>
        <authorList>
            <person name="Hugouvieux V."/>
            <person name="Dutilleul C."/>
            <person name="Jourdain A."/>
            <person name="Reynaud F."/>
            <person name="Lopez V."/>
            <person name="Bourguignon J."/>
        </authorList>
    </citation>
    <scope>FUNCTION</scope>
    <scope>INDUCTION</scope>
    <scope>CADMIUM BINDING</scope>
    <source>
        <strain>cv. Columbia</strain>
    </source>
</reference>
<reference key="10">
    <citation type="journal article" date="2012" name="Mol. Cell. Proteomics">
        <title>Comparative large-scale characterisation of plant vs. mammal proteins reveals similar and idiosyncratic N-alpha acetylation features.</title>
        <authorList>
            <person name="Bienvenut W.V."/>
            <person name="Sumpton D."/>
            <person name="Martinez A."/>
            <person name="Lilla S."/>
            <person name="Espagne C."/>
            <person name="Meinnel T."/>
            <person name="Giglione C."/>
        </authorList>
    </citation>
    <scope>ACETYLATION [LARGE SCALE ANALYSIS] AT ALA-2</scope>
    <scope>CLEAVAGE OF INITIATOR METHIONINE [LARGE SCALE ANALYSIS]</scope>
    <scope>IDENTIFICATION BY MASS SPECTROMETRY [LARGE SCALE ANALYSIS]</scope>
</reference>
<reference key="11">
    <citation type="journal article" date="2014" name="J. Biol. Chem.">
        <title>Biochemical and biophysical characterization of the selenium-binding and reducing site in Arabidopsis thaliana homologue to mammals selenium-binding protein 1.</title>
        <authorList>
            <person name="Schild F."/>
            <person name="Kieffer-Jaquinod S."/>
            <person name="Palencia A."/>
            <person name="Cobessi D."/>
            <person name="Sarret G."/>
            <person name="Zubieta C."/>
            <person name="Jourdain A."/>
            <person name="Dumas R."/>
            <person name="Forge V."/>
            <person name="Testemale D."/>
            <person name="Bourguignon J."/>
            <person name="Hugouvieux V."/>
        </authorList>
    </citation>
    <scope>FUNCTION</scope>
    <scope>SELENIUM-BINDING SITES</scope>
    <scope>MUTAGENESIS OF 21-CYS-CYS-22</scope>
</reference>
<reference key="12">
    <citation type="journal article" date="2019" name="Plant Sci.">
        <title>Novel interactions of selenium binding protein family with the PICOT containing proteins AtGRXS14 and AtGRXS16 in Arabidopsis thaliana.</title>
        <authorList>
            <person name="Valassakis C."/>
            <person name="Dervisi I."/>
            <person name="Agalou A."/>
            <person name="Papandreou N."/>
            <person name="Kapetsis G."/>
            <person name="Podia V."/>
            <person name="Haralampidis K."/>
            <person name="Iconomidou V.A."/>
            <person name="Spaink H.P."/>
            <person name="Roussis A."/>
        </authorList>
    </citation>
    <scope>INTERACTION WITH GRXS14 AND GRXS16</scope>
</reference>
<reference key="13">
    <citation type="journal article" date="2020" name="Plant Sci.">
        <title>Investigation of the interaction of DAD1-LIKE LIPASE 3 (DALL3) with Selenium Binding Protein 1 (SBP1) in Arabidopsis thaliana.</title>
        <authorList>
            <person name="Dervisi I."/>
            <person name="Valassakis C."/>
            <person name="Agalou A."/>
            <person name="Papandreou N."/>
            <person name="Podia V."/>
            <person name="Haralampidis K."/>
            <person name="Iconomidou V.A."/>
            <person name="Kouvelis V.N."/>
            <person name="Spaink H.P."/>
            <person name="Roussis A."/>
        </authorList>
    </citation>
    <scope>INTERACTION WITH DALL3</scope>
    <scope>INDUCTION</scope>
</reference>
<evidence type="ECO:0000269" key="1">
    <source>
    </source>
</evidence>
<evidence type="ECO:0000269" key="2">
    <source>
    </source>
</evidence>
<evidence type="ECO:0000269" key="3">
    <source>
    </source>
</evidence>
<evidence type="ECO:0000269" key="4">
    <source>
    </source>
</evidence>
<evidence type="ECO:0000269" key="5">
    <source>
    </source>
</evidence>
<evidence type="ECO:0000269" key="6">
    <source>
    </source>
</evidence>
<evidence type="ECO:0000303" key="7">
    <source>
    </source>
</evidence>
<evidence type="ECO:0000303" key="8">
    <source>
    </source>
</evidence>
<evidence type="ECO:0000305" key="9"/>
<evidence type="ECO:0000312" key="10">
    <source>
        <dbReference type="Araport" id="AT4G14030"/>
    </source>
</evidence>
<evidence type="ECO:0000312" key="11">
    <source>
        <dbReference type="EMBL" id="CAB10182.1"/>
    </source>
</evidence>
<evidence type="ECO:0000312" key="12">
    <source>
        <dbReference type="EMBL" id="CAB78445.1"/>
    </source>
</evidence>
<evidence type="ECO:0007744" key="13">
    <source>
    </source>
</evidence>
<organism>
    <name type="scientific">Arabidopsis thaliana</name>
    <name type="common">Mouse-ear cress</name>
    <dbReference type="NCBI Taxonomy" id="3702"/>
    <lineage>
        <taxon>Eukaryota</taxon>
        <taxon>Viridiplantae</taxon>
        <taxon>Streptophyta</taxon>
        <taxon>Embryophyta</taxon>
        <taxon>Tracheophyta</taxon>
        <taxon>Spermatophyta</taxon>
        <taxon>Magnoliopsida</taxon>
        <taxon>eudicotyledons</taxon>
        <taxon>Gunneridae</taxon>
        <taxon>Pentapetalae</taxon>
        <taxon>rosids</taxon>
        <taxon>malvids</taxon>
        <taxon>Brassicales</taxon>
        <taxon>Brassicaceae</taxon>
        <taxon>Camelineae</taxon>
        <taxon>Arabidopsis</taxon>
    </lineage>
</organism>
<protein>
    <recommendedName>
        <fullName evidence="7">Selenium-binding protein 1</fullName>
        <shortName evidence="8">AtSBP1</shortName>
    </recommendedName>
</protein>
<sequence length="490" mass="54057">MATETEVVAPVTVSNGGSKGCCKYGGPGYATPLAAMSGPSEKLIYVTAVYTGTGIDKPDYLATVDVDPSSPSYSSVIHRLPMPFVGDELHHSGWNSCSSCHGDASVDRRYLVLPSLISGRIYAIDTKENPRAPSLYKYVDPKEIADKTGLAFPHTAHCLATGEILVSCLGDEEGNAKGNGFLLLDSDFNIKNRWEKPGHSPLYGYDFWYQPRHKTMISTSWGAPKAFSKGFNLQHVADGLYGSHLHVYSWPGGEIKQLIDLGPTGLLPLEIRFLHDPSKDTGFVGSALSSNMIRFFKNSDETWSHEVVISVKPLKVENWILPEMPGLITDFLISLDDRFIYFVNWLHGDIRQYNIEDPKNPVLTGQIWVGGLLQKGSPVKAVGEDGNTFQFEVPQIKGKSLRGGPQMIQLSLDGKRLYATNSLFSAWDRQFYPEIMEKGSHIIQIDVDTEKGGLTINPDFFVDFGDEPDGPSLAHEMRYPGGDCTSDIWI</sequence>
<feature type="initiator methionine" description="Removed" evidence="13">
    <location>
        <position position="1"/>
    </location>
</feature>
<feature type="chain" id="PRO_0000174636" description="Selenium-binding protein 1">
    <location>
        <begin position="2"/>
        <end position="490"/>
    </location>
</feature>
<feature type="binding site" evidence="4">
    <location>
        <position position="21"/>
    </location>
    <ligand>
        <name>selenite</name>
        <dbReference type="ChEBI" id="CHEBI:18212"/>
    </ligand>
</feature>
<feature type="binding site" evidence="4">
    <location>
        <position position="22"/>
    </location>
    <ligand>
        <name>selenite</name>
        <dbReference type="ChEBI" id="CHEBI:18212"/>
    </ligand>
</feature>
<feature type="modified residue" description="N-acetylalanine" evidence="13">
    <location>
        <position position="2"/>
    </location>
</feature>
<feature type="mutagenesis site" description="Abolishes the capacity to bind selenium." evidence="4">
    <original>CC</original>
    <variation>SS</variation>
    <location>
        <begin position="21"/>
        <end position="22"/>
    </location>
</feature>
<feature type="sequence conflict" description="In Ref. 5; CAA81769." evidence="9" ref="5">
    <original>V</original>
    <variation>L</variation>
    <location>
        <position position="13"/>
    </location>
</feature>
<feature type="sequence conflict" description="In Ref. 6; CAC67446." evidence="9" ref="6">
    <original>GCCKY</original>
    <variation>RMLQV</variation>
    <location>
        <begin position="20"/>
        <end position="24"/>
    </location>
</feature>
<feature type="sequence conflict" description="In Ref. 5; CAA81769." evidence="9" ref="5">
    <original>RIYAIDTKE</original>
    <variation>SHLCDLDTKG</variation>
    <location>
        <begin position="120"/>
        <end position="128"/>
    </location>
</feature>
<feature type="sequence conflict" description="In Ref. 5; CAA81769." evidence="9" ref="5">
    <original>YVDPKEIA</original>
    <variation>VMLIPKEI</variation>
    <location>
        <begin position="138"/>
        <end position="145"/>
    </location>
</feature>
<feature type="sequence conflict" description="In Ref. 6; CAC67446." evidence="9" ref="6">
    <original>LA</original>
    <variation>R</variation>
    <location>
        <begin position="159"/>
        <end position="160"/>
    </location>
</feature>
<feature type="sequence conflict" description="In Ref. 6; CAC67446." evidence="9" ref="6">
    <original>F</original>
    <variation>L</variation>
    <location>
        <position position="181"/>
    </location>
</feature>
<feature type="sequence conflict" description="In Ref. 6; CAC67446." evidence="9" ref="6">
    <original>GH</original>
    <variation>DI</variation>
    <location>
        <begin position="198"/>
        <end position="199"/>
    </location>
</feature>
<feature type="sequence conflict" description="In Ref. 6; CAC67446." evidence="9" ref="6">
    <original>D</original>
    <variation>H</variation>
    <location>
        <position position="206"/>
    </location>
</feature>
<feature type="sequence conflict" description="In Ref. 6; CAC67446." evidence="9" ref="6">
    <original>DRQ</original>
    <variation>VVS</variation>
    <location>
        <begin position="428"/>
        <end position="430"/>
    </location>
</feature>
<feature type="sequence conflict" description="In Ref. 6; CAC67446." evidence="9" ref="6">
    <original>V</original>
    <variation>G</variation>
    <location>
        <position position="447"/>
    </location>
</feature>
<dbReference type="EMBL" id="Z97335">
    <property type="protein sequence ID" value="CAB10182.1"/>
    <property type="molecule type" value="Genomic_DNA"/>
</dbReference>
<dbReference type="EMBL" id="AL161537">
    <property type="protein sequence ID" value="CAB78445.1"/>
    <property type="molecule type" value="Genomic_DNA"/>
</dbReference>
<dbReference type="EMBL" id="CP002687">
    <property type="protein sequence ID" value="AEE83362.1"/>
    <property type="molecule type" value="Genomic_DNA"/>
</dbReference>
<dbReference type="EMBL" id="CP002687">
    <property type="protein sequence ID" value="AEE83363.1"/>
    <property type="molecule type" value="Genomic_DNA"/>
</dbReference>
<dbReference type="EMBL" id="AY062634">
    <property type="protein sequence ID" value="AAL32712.1"/>
    <property type="molecule type" value="mRNA"/>
</dbReference>
<dbReference type="EMBL" id="AY128727">
    <property type="protein sequence ID" value="AAM91127.1"/>
    <property type="molecule type" value="mRNA"/>
</dbReference>
<dbReference type="EMBL" id="Z27257">
    <property type="protein sequence ID" value="CAA81769.1"/>
    <property type="molecule type" value="mRNA"/>
</dbReference>
<dbReference type="EMBL" id="AJ401229">
    <property type="protein sequence ID" value="CAC67446.1"/>
    <property type="molecule type" value="mRNA"/>
</dbReference>
<dbReference type="PIR" id="D71401">
    <property type="entry name" value="D71401"/>
</dbReference>
<dbReference type="RefSeq" id="NP_001190723.1">
    <property type="nucleotide sequence ID" value="NM_001203794.2"/>
</dbReference>
<dbReference type="RefSeq" id="NP_193139.1">
    <property type="nucleotide sequence ID" value="NM_117478.6"/>
</dbReference>
<dbReference type="SMR" id="O23264"/>
<dbReference type="BioGRID" id="12336">
    <property type="interactions" value="2"/>
</dbReference>
<dbReference type="FunCoup" id="O23264">
    <property type="interactions" value="1753"/>
</dbReference>
<dbReference type="IntAct" id="O23264">
    <property type="interactions" value="2"/>
</dbReference>
<dbReference type="STRING" id="3702.O23264"/>
<dbReference type="iPTMnet" id="O23264"/>
<dbReference type="PaxDb" id="3702-AT4G14030.1"/>
<dbReference type="ProteomicsDB" id="232925"/>
<dbReference type="EnsemblPlants" id="AT4G14030.1">
    <property type="protein sequence ID" value="AT4G14030.1"/>
    <property type="gene ID" value="AT4G14030"/>
</dbReference>
<dbReference type="EnsemblPlants" id="AT4G14030.2">
    <property type="protein sequence ID" value="AT4G14030.2"/>
    <property type="gene ID" value="AT4G14030"/>
</dbReference>
<dbReference type="GeneID" id="827039"/>
<dbReference type="Gramene" id="AT4G14030.1">
    <property type="protein sequence ID" value="AT4G14030.1"/>
    <property type="gene ID" value="AT4G14030"/>
</dbReference>
<dbReference type="Gramene" id="AT4G14030.2">
    <property type="protein sequence ID" value="AT4G14030.2"/>
    <property type="gene ID" value="AT4G14030"/>
</dbReference>
<dbReference type="KEGG" id="ath:AT4G14030"/>
<dbReference type="Araport" id="AT4G14030"/>
<dbReference type="TAIR" id="AT4G14030">
    <property type="gene designation" value="SBP1"/>
</dbReference>
<dbReference type="eggNOG" id="KOG0918">
    <property type="taxonomic scope" value="Eukaryota"/>
</dbReference>
<dbReference type="HOGENOM" id="CLU_032512_0_0_1"/>
<dbReference type="InParanoid" id="O23264"/>
<dbReference type="OMA" id="AYDFWWH"/>
<dbReference type="PhylomeDB" id="O23264"/>
<dbReference type="PRO" id="PR:O23264"/>
<dbReference type="Proteomes" id="UP000006548">
    <property type="component" value="Chromosome 4"/>
</dbReference>
<dbReference type="ExpressionAtlas" id="O23264">
    <property type="expression patterns" value="baseline and differential"/>
</dbReference>
<dbReference type="GO" id="GO:0005829">
    <property type="term" value="C:cytosol"/>
    <property type="evidence" value="ECO:0007005"/>
    <property type="project" value="TAIR"/>
</dbReference>
<dbReference type="GO" id="GO:0009506">
    <property type="term" value="C:plasmodesma"/>
    <property type="evidence" value="ECO:0007005"/>
    <property type="project" value="TAIR"/>
</dbReference>
<dbReference type="GO" id="GO:0008430">
    <property type="term" value="F:selenium binding"/>
    <property type="evidence" value="ECO:0007669"/>
    <property type="project" value="InterPro"/>
</dbReference>
<dbReference type="GO" id="GO:0071291">
    <property type="term" value="P:cellular response to selenium ion"/>
    <property type="evidence" value="ECO:0000314"/>
    <property type="project" value="TAIR"/>
</dbReference>
<dbReference type="GO" id="GO:0046686">
    <property type="term" value="P:response to cadmium ion"/>
    <property type="evidence" value="ECO:0000314"/>
    <property type="project" value="TAIR"/>
</dbReference>
<dbReference type="GO" id="GO:0042542">
    <property type="term" value="P:response to hydrogen peroxide"/>
    <property type="evidence" value="ECO:0000314"/>
    <property type="project" value="TAIR"/>
</dbReference>
<dbReference type="GO" id="GO:0000103">
    <property type="term" value="P:sulfate assimilation"/>
    <property type="evidence" value="ECO:0000270"/>
    <property type="project" value="TAIR"/>
</dbReference>
<dbReference type="InterPro" id="IPR008826">
    <property type="entry name" value="Se-bd"/>
</dbReference>
<dbReference type="PANTHER" id="PTHR23300">
    <property type="entry name" value="METHANETHIOL OXIDASE"/>
    <property type="match status" value="1"/>
</dbReference>
<dbReference type="PANTHER" id="PTHR23300:SF15">
    <property type="entry name" value="SELENIUM-BINDING PROTEIN 1"/>
    <property type="match status" value="1"/>
</dbReference>
<dbReference type="Pfam" id="PF05694">
    <property type="entry name" value="SBP56"/>
    <property type="match status" value="1"/>
</dbReference>
<dbReference type="SUPFAM" id="SSF75011">
    <property type="entry name" value="3-carboxy-cis,cis-mucoante lactonizing enzyme"/>
    <property type="match status" value="1"/>
</dbReference>
<comment type="function">
    <text evidence="2 3 4">Binds cadmium and mediates lower sensitivity to stress requiring glutathione (GSH) for tolerance (e.g. cadmium, selenate, and hydrogen peroxide excess). Probably helps to detoxify cadmium potentially through direct binding (PubMed:18354042, PubMed:19710230). Binds selenium, cadmium, zinc and nickel in vitro (PubMed:25274629).</text>
</comment>
<comment type="subunit">
    <text evidence="5 6">Interacts with GRXS14 and GRXS16 (PubMed:30824043). Interacts with DALL3 (PubMed:31928671).</text>
</comment>
<comment type="tissue specificity">
    <text evidence="2">Expressed in seedlings, roots, leaves, stems and flowers.</text>
</comment>
<comment type="induction">
    <text evidence="1 2 3">Induced by cadmium (at protein level) (PubMed:16502469, PubMed:18354042, PubMed:19710230). Induced by selenium (selenate), copper and hydrogen peroxide H(2)O(2) (at protein level) (PubMed:16502469, PubMed:18354042, PubMed:19710230). The induction in response to sulfur starvation is repressed by glutathione (GSH) (at protein level) (PubMed:19710230).</text>
</comment>
<comment type="similarity">
    <text evidence="9">Belongs to the selenium-binding protein family.</text>
</comment>
<name>SEBP1_ARATH</name>
<proteinExistence type="evidence at protein level"/>
<gene>
    <name evidence="7" type="primary">SBP1</name>
    <name evidence="10" type="ordered locus">At4g14030</name>
    <name evidence="11" type="ORF">dl3055c</name>
    <name evidence="12" type="ORF">FCAALL.79</name>
</gene>
<accession>O23264</accession>
<accession>Q42178</accession>
<accession>Q93WU0</accession>
<keyword id="KW-0007">Acetylation</keyword>
<keyword id="KW-1185">Reference proteome</keyword>
<keyword id="KW-0711">Selenium</keyword>